<feature type="chain" id="PRO_0000231956" description="Probable RNA 2'-phosphotransferase">
    <location>
        <begin position="1"/>
        <end position="188"/>
    </location>
</feature>
<reference key="1">
    <citation type="journal article" date="2005" name="J. Bacteriol.">
        <title>Whole-genome sequence analysis of Pseudomonas syringae pv. phaseolicola 1448A reveals divergence among pathovars in genes involved in virulence and transposition.</title>
        <authorList>
            <person name="Joardar V."/>
            <person name="Lindeberg M."/>
            <person name="Jackson R.W."/>
            <person name="Selengut J."/>
            <person name="Dodson R."/>
            <person name="Brinkac L.M."/>
            <person name="Daugherty S.C."/>
            <person name="DeBoy R.T."/>
            <person name="Durkin A.S."/>
            <person name="Gwinn Giglio M."/>
            <person name="Madupu R."/>
            <person name="Nelson W.C."/>
            <person name="Rosovitz M.J."/>
            <person name="Sullivan S.A."/>
            <person name="Crabtree J."/>
            <person name="Creasy T."/>
            <person name="Davidsen T.M."/>
            <person name="Haft D.H."/>
            <person name="Zafar N."/>
            <person name="Zhou L."/>
            <person name="Halpin R."/>
            <person name="Holley T."/>
            <person name="Khouri H.M."/>
            <person name="Feldblyum T.V."/>
            <person name="White O."/>
            <person name="Fraser C.M."/>
            <person name="Chatterjee A.K."/>
            <person name="Cartinhour S."/>
            <person name="Schneider D."/>
            <person name="Mansfield J.W."/>
            <person name="Collmer A."/>
            <person name="Buell R."/>
        </authorList>
    </citation>
    <scope>NUCLEOTIDE SEQUENCE [LARGE SCALE GENOMIC DNA]</scope>
    <source>
        <strain>1448A / Race 6</strain>
    </source>
</reference>
<gene>
    <name evidence="1" type="primary">kptA</name>
    <name type="ordered locus">PSPPH_4372</name>
</gene>
<keyword id="KW-0520">NAD</keyword>
<keyword id="KW-0808">Transferase</keyword>
<evidence type="ECO:0000255" key="1">
    <source>
        <dbReference type="HAMAP-Rule" id="MF_00299"/>
    </source>
</evidence>
<name>KPTA_PSE14</name>
<accession>Q48DQ3</accession>
<dbReference type="EC" id="2.7.1.-" evidence="1"/>
<dbReference type="EMBL" id="CP000058">
    <property type="protein sequence ID" value="AAZ33305.1"/>
    <property type="molecule type" value="Genomic_DNA"/>
</dbReference>
<dbReference type="SMR" id="Q48DQ3"/>
<dbReference type="KEGG" id="psp:PSPPH_4372"/>
<dbReference type="eggNOG" id="COG1859">
    <property type="taxonomic scope" value="Bacteria"/>
</dbReference>
<dbReference type="HOGENOM" id="CLU_052998_4_0_6"/>
<dbReference type="Proteomes" id="UP000000551">
    <property type="component" value="Chromosome"/>
</dbReference>
<dbReference type="GO" id="GO:0003950">
    <property type="term" value="F:NAD+ poly-ADP-ribosyltransferase activity"/>
    <property type="evidence" value="ECO:0007669"/>
    <property type="project" value="InterPro"/>
</dbReference>
<dbReference type="GO" id="GO:0000215">
    <property type="term" value="F:tRNA 2'-phosphotransferase activity"/>
    <property type="evidence" value="ECO:0007669"/>
    <property type="project" value="TreeGrafter"/>
</dbReference>
<dbReference type="GO" id="GO:0006388">
    <property type="term" value="P:tRNA splicing, via endonucleolytic cleavage and ligation"/>
    <property type="evidence" value="ECO:0007669"/>
    <property type="project" value="UniProtKB-UniRule"/>
</dbReference>
<dbReference type="Gene3D" id="3.20.170.30">
    <property type="match status" value="1"/>
</dbReference>
<dbReference type="Gene3D" id="1.10.10.970">
    <property type="entry name" value="RNA 2'-phosphotransferase, Tpt1/KptA family, N-terminal domain"/>
    <property type="match status" value="1"/>
</dbReference>
<dbReference type="HAMAP" id="MF_00299">
    <property type="entry name" value="KptA"/>
    <property type="match status" value="1"/>
</dbReference>
<dbReference type="InterPro" id="IPR002745">
    <property type="entry name" value="Ptrans_KptA/Tpt1"/>
</dbReference>
<dbReference type="InterPro" id="IPR042081">
    <property type="entry name" value="RNA_2'-PTrans_C"/>
</dbReference>
<dbReference type="InterPro" id="IPR022928">
    <property type="entry name" value="RNA_2'-PTrans_KptA"/>
</dbReference>
<dbReference type="InterPro" id="IPR042080">
    <property type="entry name" value="RNA_2'-PTrans_N"/>
</dbReference>
<dbReference type="NCBIfam" id="NF002014">
    <property type="entry name" value="PRK00819.1-4"/>
    <property type="match status" value="1"/>
</dbReference>
<dbReference type="PANTHER" id="PTHR12684">
    <property type="entry name" value="PUTATIVE PHOSPHOTRANSFERASE"/>
    <property type="match status" value="1"/>
</dbReference>
<dbReference type="PANTHER" id="PTHR12684:SF2">
    <property type="entry name" value="TRNA 2'-PHOSPHOTRANSFERASE 1"/>
    <property type="match status" value="1"/>
</dbReference>
<dbReference type="Pfam" id="PF01885">
    <property type="entry name" value="PTS_2-RNA"/>
    <property type="match status" value="1"/>
</dbReference>
<dbReference type="SUPFAM" id="SSF56399">
    <property type="entry name" value="ADP-ribosylation"/>
    <property type="match status" value="1"/>
</dbReference>
<comment type="function">
    <text evidence="1">Removes the 2'-phosphate from RNA via an intermediate in which the phosphate is ADP-ribosylated by NAD followed by a presumed transesterification to release the RNA and generate ADP-ribose 1''-2''-cyclic phosphate (APPR&gt;P). May function as an ADP-ribosylase.</text>
</comment>
<comment type="similarity">
    <text evidence="1">Belongs to the KptA/TPT1 family.</text>
</comment>
<sequence>MNKKQRDEISKLLSYLLRHAPESMGLTLDRDGWSEVDDLIRKANAHGYAFDRQALNEVVETNEKKRFTLSEDDQRIRAAQGHSTVQVQVQHAEKEPPATLYHGTASRFMTSIETQGLIAGSRHHVHLTEDPETAMSVGKRYGQPVLLAVDAKGMFEAGVRFFQADNGIWLVKAVSRDSLTVLRLPIPE</sequence>
<proteinExistence type="inferred from homology"/>
<protein>
    <recommendedName>
        <fullName evidence="1">Probable RNA 2'-phosphotransferase</fullName>
        <ecNumber evidence="1">2.7.1.-</ecNumber>
    </recommendedName>
</protein>
<organism>
    <name type="scientific">Pseudomonas savastanoi pv. phaseolicola (strain 1448A / Race 6)</name>
    <name type="common">Pseudomonas syringae pv. phaseolicola (strain 1448A / Race 6)</name>
    <dbReference type="NCBI Taxonomy" id="264730"/>
    <lineage>
        <taxon>Bacteria</taxon>
        <taxon>Pseudomonadati</taxon>
        <taxon>Pseudomonadota</taxon>
        <taxon>Gammaproteobacteria</taxon>
        <taxon>Pseudomonadales</taxon>
        <taxon>Pseudomonadaceae</taxon>
        <taxon>Pseudomonas</taxon>
    </lineage>
</organism>